<comment type="function">
    <text evidence="1">Regulates the transcription of several operons and genes involved in the biogenesis of Fe-S clusters and Fe-S-containing proteins.</text>
</comment>
<comment type="cofactor">
    <cofactor evidence="1">
        <name>[2Fe-2S] cluster</name>
        <dbReference type="ChEBI" id="CHEBI:190135"/>
    </cofactor>
    <text evidence="1">Binds 1 [2Fe-2S] cluster.</text>
</comment>
<accession>P0AGL0</accession>
<accession>P77484</accession>
<reference key="1">
    <citation type="journal article" date="2001" name="Nature">
        <title>Genome sequence of enterohaemorrhagic Escherichia coli O157:H7.</title>
        <authorList>
            <person name="Perna N.T."/>
            <person name="Plunkett G. III"/>
            <person name="Burland V."/>
            <person name="Mau B."/>
            <person name="Glasner J.D."/>
            <person name="Rose D.J."/>
            <person name="Mayhew G.F."/>
            <person name="Evans P.S."/>
            <person name="Gregor J."/>
            <person name="Kirkpatrick H.A."/>
            <person name="Posfai G."/>
            <person name="Hackett J."/>
            <person name="Klink S."/>
            <person name="Boutin A."/>
            <person name="Shao Y."/>
            <person name="Miller L."/>
            <person name="Grotbeck E.J."/>
            <person name="Davis N.W."/>
            <person name="Lim A."/>
            <person name="Dimalanta E.T."/>
            <person name="Potamousis K."/>
            <person name="Apodaca J."/>
            <person name="Anantharaman T.S."/>
            <person name="Lin J."/>
            <person name="Yen G."/>
            <person name="Schwartz D.C."/>
            <person name="Welch R.A."/>
            <person name="Blattner F.R."/>
        </authorList>
    </citation>
    <scope>NUCLEOTIDE SEQUENCE [LARGE SCALE GENOMIC DNA]</scope>
    <source>
        <strain>O157:H7 / EDL933 / ATCC 700927 / EHEC</strain>
    </source>
</reference>
<reference key="2">
    <citation type="journal article" date="2001" name="DNA Res.">
        <title>Complete genome sequence of enterohemorrhagic Escherichia coli O157:H7 and genomic comparison with a laboratory strain K-12.</title>
        <authorList>
            <person name="Hayashi T."/>
            <person name="Makino K."/>
            <person name="Ohnishi M."/>
            <person name="Kurokawa K."/>
            <person name="Ishii K."/>
            <person name="Yokoyama K."/>
            <person name="Han C.-G."/>
            <person name="Ohtsubo E."/>
            <person name="Nakayama K."/>
            <person name="Murata T."/>
            <person name="Tanaka M."/>
            <person name="Tobe T."/>
            <person name="Iida T."/>
            <person name="Takami H."/>
            <person name="Honda T."/>
            <person name="Sasakawa C."/>
            <person name="Ogasawara N."/>
            <person name="Yasunaga T."/>
            <person name="Kuhara S."/>
            <person name="Shiba T."/>
            <person name="Hattori M."/>
            <person name="Shinagawa H."/>
        </authorList>
    </citation>
    <scope>NUCLEOTIDE SEQUENCE [LARGE SCALE GENOMIC DNA]</scope>
    <source>
        <strain>O157:H7 / Sakai / RIMD 0509952 / EHEC</strain>
    </source>
</reference>
<protein>
    <recommendedName>
        <fullName evidence="1">HTH-type transcriptional regulator IscR</fullName>
    </recommendedName>
</protein>
<gene>
    <name evidence="1" type="primary">iscR</name>
    <name type="synonym">yfhP</name>
    <name type="ordered locus">Z3798</name>
    <name type="ordered locus">ECs3397</name>
</gene>
<keyword id="KW-0001">2Fe-2S</keyword>
<keyword id="KW-0010">Activator</keyword>
<keyword id="KW-0238">DNA-binding</keyword>
<keyword id="KW-0408">Iron</keyword>
<keyword id="KW-0411">Iron-sulfur</keyword>
<keyword id="KW-0479">Metal-binding</keyword>
<keyword id="KW-1185">Reference proteome</keyword>
<keyword id="KW-0678">Repressor</keyword>
<keyword id="KW-0804">Transcription</keyword>
<keyword id="KW-0805">Transcription regulation</keyword>
<evidence type="ECO:0000255" key="1">
    <source>
        <dbReference type="HAMAP-Rule" id="MF_01176"/>
    </source>
</evidence>
<evidence type="ECO:0000256" key="2">
    <source>
        <dbReference type="SAM" id="MobiDB-lite"/>
    </source>
</evidence>
<organism>
    <name type="scientific">Escherichia coli O157:H7</name>
    <dbReference type="NCBI Taxonomy" id="83334"/>
    <lineage>
        <taxon>Bacteria</taxon>
        <taxon>Pseudomonadati</taxon>
        <taxon>Pseudomonadota</taxon>
        <taxon>Gammaproteobacteria</taxon>
        <taxon>Enterobacterales</taxon>
        <taxon>Enterobacteriaceae</taxon>
        <taxon>Escherichia</taxon>
    </lineage>
</organism>
<dbReference type="EMBL" id="AE005174">
    <property type="protein sequence ID" value="AAG57645.1"/>
    <property type="molecule type" value="Genomic_DNA"/>
</dbReference>
<dbReference type="EMBL" id="BA000007">
    <property type="protein sequence ID" value="BAB36820.1"/>
    <property type="molecule type" value="Genomic_DNA"/>
</dbReference>
<dbReference type="PIR" id="A85898">
    <property type="entry name" value="A85898"/>
</dbReference>
<dbReference type="PIR" id="E91053">
    <property type="entry name" value="E91053"/>
</dbReference>
<dbReference type="RefSeq" id="NP_311424.1">
    <property type="nucleotide sequence ID" value="NC_002695.1"/>
</dbReference>
<dbReference type="RefSeq" id="WP_001241357.1">
    <property type="nucleotide sequence ID" value="NZ_VOAI01000001.1"/>
</dbReference>
<dbReference type="SMR" id="P0AGL0"/>
<dbReference type="STRING" id="155864.Z3798"/>
<dbReference type="GeneID" id="86947421"/>
<dbReference type="GeneID" id="915159"/>
<dbReference type="KEGG" id="ece:Z3798"/>
<dbReference type="KEGG" id="ecs:ECs_3397"/>
<dbReference type="PATRIC" id="fig|386585.9.peg.3549"/>
<dbReference type="eggNOG" id="COG1959">
    <property type="taxonomic scope" value="Bacteria"/>
</dbReference>
<dbReference type="HOGENOM" id="CLU_107144_0_0_6"/>
<dbReference type="OMA" id="RCMTHDL"/>
<dbReference type="Proteomes" id="UP000000558">
    <property type="component" value="Chromosome"/>
</dbReference>
<dbReference type="Proteomes" id="UP000002519">
    <property type="component" value="Chromosome"/>
</dbReference>
<dbReference type="GO" id="GO:0005829">
    <property type="term" value="C:cytosol"/>
    <property type="evidence" value="ECO:0007669"/>
    <property type="project" value="TreeGrafter"/>
</dbReference>
<dbReference type="GO" id="GO:0051537">
    <property type="term" value="F:2 iron, 2 sulfur cluster binding"/>
    <property type="evidence" value="ECO:0007669"/>
    <property type="project" value="UniProtKB-KW"/>
</dbReference>
<dbReference type="GO" id="GO:0003700">
    <property type="term" value="F:DNA-binding transcription factor activity"/>
    <property type="evidence" value="ECO:0007669"/>
    <property type="project" value="UniProtKB-UniRule"/>
</dbReference>
<dbReference type="GO" id="GO:0003690">
    <property type="term" value="F:double-stranded DNA binding"/>
    <property type="evidence" value="ECO:0007669"/>
    <property type="project" value="UniProtKB-UniRule"/>
</dbReference>
<dbReference type="GO" id="GO:0005506">
    <property type="term" value="F:iron ion binding"/>
    <property type="evidence" value="ECO:0007669"/>
    <property type="project" value="UniProtKB-UniRule"/>
</dbReference>
<dbReference type="FunFam" id="1.10.10.10:FF:000026">
    <property type="entry name" value="HTH-type transcriptional regulator IscR"/>
    <property type="match status" value="1"/>
</dbReference>
<dbReference type="Gene3D" id="1.10.10.10">
    <property type="entry name" value="Winged helix-like DNA-binding domain superfamily/Winged helix DNA-binding domain"/>
    <property type="match status" value="1"/>
</dbReference>
<dbReference type="HAMAP" id="MF_01176">
    <property type="entry name" value="HTH_type_IscR"/>
    <property type="match status" value="1"/>
</dbReference>
<dbReference type="InterPro" id="IPR010242">
    <property type="entry name" value="TF_HTH_IscR"/>
</dbReference>
<dbReference type="InterPro" id="IPR030489">
    <property type="entry name" value="TR_Rrf2-type_CS"/>
</dbReference>
<dbReference type="InterPro" id="IPR000944">
    <property type="entry name" value="Tscrpt_reg_Rrf2"/>
</dbReference>
<dbReference type="InterPro" id="IPR036388">
    <property type="entry name" value="WH-like_DNA-bd_sf"/>
</dbReference>
<dbReference type="InterPro" id="IPR036390">
    <property type="entry name" value="WH_DNA-bd_sf"/>
</dbReference>
<dbReference type="NCBIfam" id="TIGR02010">
    <property type="entry name" value="IscR"/>
    <property type="match status" value="1"/>
</dbReference>
<dbReference type="NCBIfam" id="NF008110">
    <property type="entry name" value="PRK10857.1"/>
    <property type="match status" value="1"/>
</dbReference>
<dbReference type="NCBIfam" id="TIGR00738">
    <property type="entry name" value="rrf2_super"/>
    <property type="match status" value="1"/>
</dbReference>
<dbReference type="PANTHER" id="PTHR33221:SF5">
    <property type="entry name" value="HTH-TYPE TRANSCRIPTIONAL REGULATOR ISCR"/>
    <property type="match status" value="1"/>
</dbReference>
<dbReference type="PANTHER" id="PTHR33221">
    <property type="entry name" value="WINGED HELIX-TURN-HELIX TRANSCRIPTIONAL REGULATOR, RRF2 FAMILY"/>
    <property type="match status" value="1"/>
</dbReference>
<dbReference type="Pfam" id="PF02082">
    <property type="entry name" value="Rrf2"/>
    <property type="match status" value="1"/>
</dbReference>
<dbReference type="SUPFAM" id="SSF46785">
    <property type="entry name" value="Winged helix' DNA-binding domain"/>
    <property type="match status" value="1"/>
</dbReference>
<dbReference type="PROSITE" id="PS01332">
    <property type="entry name" value="HTH_RRF2_1"/>
    <property type="match status" value="1"/>
</dbReference>
<dbReference type="PROSITE" id="PS51197">
    <property type="entry name" value="HTH_RRF2_2"/>
    <property type="match status" value="1"/>
</dbReference>
<name>ISCR_ECO57</name>
<proteinExistence type="inferred from homology"/>
<sequence length="162" mass="17337">MRLTSKGRYAVTAMLDVALNSEAGPVPLADISERQGISLSYLEQLFSRLRKNGLVSSVRGPGGGYLLGKDASSIAVGEVISAVDESVDATRCQGKGGCQGGDKCLTHALWRDLSDRLTGFLNNITLGELVNNQEVLDVSGRQHTHDAPRTRTQDAIDVKLRA</sequence>
<feature type="chain" id="PRO_0000109561" description="HTH-type transcriptional regulator IscR">
    <location>
        <begin position="1"/>
        <end position="162"/>
    </location>
</feature>
<feature type="domain" description="HTH rrf2-type" evidence="1">
    <location>
        <begin position="2"/>
        <end position="131"/>
    </location>
</feature>
<feature type="DNA-binding region" description="H-T-H motif" evidence="1">
    <location>
        <begin position="28"/>
        <end position="51"/>
    </location>
</feature>
<feature type="region of interest" description="Disordered" evidence="2">
    <location>
        <begin position="140"/>
        <end position="162"/>
    </location>
</feature>
<feature type="compositionally biased region" description="Basic and acidic residues" evidence="2">
    <location>
        <begin position="143"/>
        <end position="162"/>
    </location>
</feature>
<feature type="binding site" evidence="1">
    <location>
        <position position="92"/>
    </location>
    <ligand>
        <name>[2Fe-2S] cluster</name>
        <dbReference type="ChEBI" id="CHEBI:190135"/>
    </ligand>
</feature>
<feature type="binding site" evidence="1">
    <location>
        <position position="98"/>
    </location>
    <ligand>
        <name>[2Fe-2S] cluster</name>
        <dbReference type="ChEBI" id="CHEBI:190135"/>
    </ligand>
</feature>
<feature type="binding site" evidence="1">
    <location>
        <position position="104"/>
    </location>
    <ligand>
        <name>[2Fe-2S] cluster</name>
        <dbReference type="ChEBI" id="CHEBI:190135"/>
    </ligand>
</feature>